<protein>
    <recommendedName>
        <fullName>Cephalotocin</fullName>
    </recommendedName>
</protein>
<reference key="1">
    <citation type="journal article" date="1992" name="Neurosci. Lett.">
        <title>A new peptide of the oxytocin/vasopressin family isolated from nerves of the cephalopod Octopus vulgaris.</title>
        <authorList>
            <person name="Reich G."/>
        </authorList>
    </citation>
    <scope>PROTEIN SEQUENCE</scope>
    <scope>AMIDATION AT GLY-9</scope>
    <source>
        <tissue>Nerve ending</tissue>
    </source>
</reference>
<dbReference type="Proteomes" id="UP000515154">
    <property type="component" value="Unplaced"/>
</dbReference>
<dbReference type="GO" id="GO:0005576">
    <property type="term" value="C:extracellular region"/>
    <property type="evidence" value="ECO:0007669"/>
    <property type="project" value="UniProtKB-SubCell"/>
</dbReference>
<dbReference type="GO" id="GO:0005185">
    <property type="term" value="F:neurohypophyseal hormone activity"/>
    <property type="evidence" value="ECO:0007669"/>
    <property type="project" value="InterPro"/>
</dbReference>
<dbReference type="InterPro" id="IPR022423">
    <property type="entry name" value="Neurohypophysial_hormone_CS"/>
</dbReference>
<dbReference type="PROSITE" id="PS00264">
    <property type="entry name" value="NEUROHYPOPHYS_HORM"/>
    <property type="match status" value="1"/>
</dbReference>
<name>OXYT_OCTVU</name>
<feature type="peptide" id="PRO_0000044096" description="Cephalotocin">
    <location>
        <begin position="1"/>
        <end position="9"/>
    </location>
</feature>
<feature type="modified residue" description="Glycine amide" evidence="1">
    <location>
        <position position="9"/>
    </location>
</feature>
<feature type="disulfide bond">
    <location>
        <begin position="1"/>
        <end position="6"/>
    </location>
</feature>
<accession>P80027</accession>
<proteinExistence type="evidence at protein level"/>
<evidence type="ECO:0000269" key="1">
    <source>
    </source>
</evidence>
<evidence type="ECO:0000305" key="2"/>
<organism>
    <name type="scientific">Octopus vulgaris</name>
    <name type="common">Common octopus</name>
    <dbReference type="NCBI Taxonomy" id="6645"/>
    <lineage>
        <taxon>Eukaryota</taxon>
        <taxon>Metazoa</taxon>
        <taxon>Spiralia</taxon>
        <taxon>Lophotrochozoa</taxon>
        <taxon>Mollusca</taxon>
        <taxon>Cephalopoda</taxon>
        <taxon>Coleoidea</taxon>
        <taxon>Octopodiformes</taxon>
        <taxon>Octopoda</taxon>
        <taxon>Incirrata</taxon>
        <taxon>Octopodidae</taxon>
        <taxon>Octopus</taxon>
    </lineage>
</organism>
<keyword id="KW-0027">Amidation</keyword>
<keyword id="KW-0903">Direct protein sequencing</keyword>
<keyword id="KW-1015">Disulfide bond</keyword>
<keyword id="KW-0372">Hormone</keyword>
<keyword id="KW-1185">Reference proteome</keyword>
<keyword id="KW-0964">Secreted</keyword>
<comment type="function">
    <text>Has a role in the neurosecretory system of the vena cava.</text>
</comment>
<comment type="subcellular location">
    <subcellularLocation>
        <location>Secreted</location>
    </subcellularLocation>
</comment>
<comment type="similarity">
    <text evidence="2">Belongs to the vasopressin/oxytocin family.</text>
</comment>
<sequence length="9" mass="1072">CYFRNCPIG</sequence>